<sequence length="1531" mass="160748">MSSEKDIKSTCSKFSLSVVAAILASVSGLASCVDLHAGGQSVNELVYVGPQAVLLLDQIRDLFVGSKDSQAEGQYRLIVGDPSSFQEKDADTLPGKVEQSTLFSVTNPVVFQGVDQQDQVSSQGLICSFTSSNLDSPRDGESFLGIAFVGDSSKAGITLTDVKASLSGAALYSTEDLIFEKIKGGLEFASCSSLEQGGACAAQSILIHDCQGLQVKHCTTAVNAEGSSANDHLGFGGGAFFVTGSLSGEKSLYMPAGDMVVANCDGAISFEGNSANFANGGAIAASGKVLFVANDKKTSFIENRALSGGAIAASSDIAFQNCAELVFKGNCAIGTEDKGSLGGGAISSLGTVLLQGNHGITCDKNESASQGGAIFGKNCQISDNEGPVVFRDSTACLGGGAIAAQEIVSIQNNQAGISFEGGKASFGGGIACGSFSSAGGASVLGTIDISKNLGAISFSRTLCTTSDLGQMEYQGGGALFGENISLSENAGVLTFKDNIVKTFASNGKILGGGAILATGKVEITNNSEGISFTGNARAPQALPTQEEFPLFSKKEGRPLSSGYSGGGAILGREVAILHNAAVVFEQNRLQCSEEEATLLGCCGGGAVHGMDSTSIVGNSSVRFGNNYAMGQGVSGGALLSKTVQLAGNGSVDFSRNIASLGGGALQASEGNCELVDNGYVLFRDNRGRVYGGAISCLRGDVVISGNKGRVEFKDNIATRLYVEETVEKVEEVEPAPEQKDNNELSFLGRAEQSFITAANQALFASEDGDLSPESSISSEELAKRRECAGGAIFAKRVRIVDNQEAVVFSNNFSDIYGGAIFTGSLREEDKLDGQIPEVLISGNAGDVVFSGNSSKRDEHLPHTGGGAICTQNLTISQNTGNVLFYNNVACSGGAVRIEDHGNVLLEAFGGDIVFKGNSSFRAQGSDAIYFAGKESHITALNATEGHAIVFHDALVFENLEERKSAEVLLINSRENPGYTGSIRFLEAESKVPQCIHVQQGSLELLNGATLCSYGFKQDAGAKLVLAAGAKLKILDSGTPVQQGHAISKPEAEIESSSEPEGAHSLWIAKNAQTTVPMVDIHTISVDLASFSSSQQEGTVEAPQVIVPGGSYVRSGELNLELVNTTGTGYENHALLKNEAKVPLMSFVASGDEASAEISNLSVSDLQIHVVTPEIEEDTYGHMGDWSEAKIQDGTLVISWNPTGYRLDPQKAGALVFNALWEEGAVLSALKNARFAHNLTAQRMEFDYSTNVWGFAFGGFRTLSAENLVAIDGYKGAYGGASAGVDIQLMEDFVLGVSGAAFLGKMDSQKFDAEVSRKGVVGSVYTGFLAGSWFFKGQYSLGETQNDMKTRYGVLGESSASWTSRGVLADALVEYRSLVGPVRPTFYALHFNPYVEVSYASMKFPGFTEQGREARSFEDASLTNITIPLGMKFELAFIKGQFSEVNSLGISYAWEAYRKVEGGAVQLLEAGFDWEGAPMDLPRQELRVALENNTEWSSYFSTVLGLTAFCGGFTSTDSKLGYEANTGLRLIF</sequence>
<evidence type="ECO:0000255" key="1"/>
<evidence type="ECO:0000255" key="2">
    <source>
        <dbReference type="PROSITE-ProRule" id="PRU00556"/>
    </source>
</evidence>
<evidence type="ECO:0000305" key="3"/>
<dbReference type="EMBL" id="AE001273">
    <property type="protein sequence ID" value="AAC68408.1"/>
    <property type="molecule type" value="Genomic_DNA"/>
</dbReference>
<dbReference type="PIR" id="H71468">
    <property type="entry name" value="H71468"/>
</dbReference>
<dbReference type="RefSeq" id="NP_220332.1">
    <property type="nucleotide sequence ID" value="NC_000117.1"/>
</dbReference>
<dbReference type="RefSeq" id="WP_010725352.1">
    <property type="nucleotide sequence ID" value="NC_000117.1"/>
</dbReference>
<dbReference type="STRING" id="272561.CT_812"/>
<dbReference type="TCDB" id="1.B.12.1.9">
    <property type="family name" value="the autotransporter-1 (at-1) family"/>
</dbReference>
<dbReference type="EnsemblBacteria" id="AAC68408">
    <property type="protein sequence ID" value="AAC68408"/>
    <property type="gene ID" value="CT_812"/>
</dbReference>
<dbReference type="GeneID" id="884611"/>
<dbReference type="KEGG" id="ctr:CT_812"/>
<dbReference type="PATRIC" id="fig|272561.5.peg.895"/>
<dbReference type="HOGENOM" id="CLU_247701_0_0_0"/>
<dbReference type="InParanoid" id="O84818"/>
<dbReference type="OrthoDB" id="19123at2"/>
<dbReference type="PHI-base" id="PHI:3488"/>
<dbReference type="Proteomes" id="UP000000431">
    <property type="component" value="Chromosome"/>
</dbReference>
<dbReference type="GO" id="GO:0009279">
    <property type="term" value="C:cell outer membrane"/>
    <property type="evidence" value="ECO:0007669"/>
    <property type="project" value="UniProtKB-SubCell"/>
</dbReference>
<dbReference type="GO" id="GO:0005576">
    <property type="term" value="C:extracellular region"/>
    <property type="evidence" value="ECO:0007669"/>
    <property type="project" value="UniProtKB-KW"/>
</dbReference>
<dbReference type="Gene3D" id="2.40.128.130">
    <property type="entry name" value="Autotransporter beta-domain"/>
    <property type="match status" value="1"/>
</dbReference>
<dbReference type="InterPro" id="IPR005546">
    <property type="entry name" value="Autotransporte_beta"/>
</dbReference>
<dbReference type="InterPro" id="IPR036709">
    <property type="entry name" value="Autotransporte_beta_dom_sf"/>
</dbReference>
<dbReference type="InterPro" id="IPR011427">
    <property type="entry name" value="Polymorphic_membr_middle"/>
</dbReference>
<dbReference type="InterPro" id="IPR003368">
    <property type="entry name" value="POMP_repeat"/>
</dbReference>
<dbReference type="NCBIfam" id="TIGR01376">
    <property type="entry name" value="POMP_repeat"/>
    <property type="match status" value="4"/>
</dbReference>
<dbReference type="Pfam" id="PF03797">
    <property type="entry name" value="Autotransporter"/>
    <property type="match status" value="1"/>
</dbReference>
<dbReference type="Pfam" id="PF02415">
    <property type="entry name" value="Chlam_PMP"/>
    <property type="match status" value="2"/>
</dbReference>
<dbReference type="Pfam" id="PF07548">
    <property type="entry name" value="ChlamPMP_M"/>
    <property type="match status" value="1"/>
</dbReference>
<dbReference type="SMART" id="SM00869">
    <property type="entry name" value="Autotransporter"/>
    <property type="match status" value="1"/>
</dbReference>
<dbReference type="SUPFAM" id="SSF103515">
    <property type="entry name" value="Autotransporter"/>
    <property type="match status" value="1"/>
</dbReference>
<dbReference type="PROSITE" id="PS51208">
    <property type="entry name" value="AUTOTRANSPORTER"/>
    <property type="match status" value="1"/>
</dbReference>
<organism>
    <name type="scientific">Chlamydia trachomatis serovar D (strain ATCC VR-885 / DSM 19411 / UW-3/Cx)</name>
    <dbReference type="NCBI Taxonomy" id="272561"/>
    <lineage>
        <taxon>Bacteria</taxon>
        <taxon>Pseudomonadati</taxon>
        <taxon>Chlamydiota</taxon>
        <taxon>Chlamydiia</taxon>
        <taxon>Chlamydiales</taxon>
        <taxon>Chlamydiaceae</taxon>
        <taxon>Chlamydia/Chlamydophila group</taxon>
        <taxon>Chlamydia</taxon>
    </lineage>
</organism>
<comment type="subcellular location">
    <subcellularLocation>
        <location>Secreted</location>
        <location>Cell wall</location>
    </subcellularLocation>
    <subcellularLocation>
        <location evidence="3">Cell outer membrane</location>
        <topology evidence="3">Peripheral membrane protein</topology>
        <orientation evidence="3">Extracellular side</orientation>
    </subcellularLocation>
</comment>
<comment type="developmental stage">
    <text>Elementary body.</text>
</comment>
<comment type="similarity">
    <text evidence="3">Belongs to the PMP outer membrane protein family.</text>
</comment>
<name>PMPD_CHLTR</name>
<gene>
    <name type="primary">pmpD</name>
    <name type="ordered locus">CT_812</name>
</gene>
<feature type="signal peptide" evidence="1">
    <location>
        <begin position="1"/>
        <end position="20"/>
    </location>
</feature>
<feature type="chain" id="PRO_0000024723" description="Probable outer membrane protein PmpD">
    <location>
        <begin position="21"/>
        <end position="1531"/>
    </location>
</feature>
<feature type="domain" description="Autotransporter" evidence="2">
    <location>
        <begin position="1244"/>
        <end position="1531"/>
    </location>
</feature>
<accession>O84818</accession>
<proteinExistence type="evidence at transcript level"/>
<reference key="1">
    <citation type="journal article" date="1998" name="Science">
        <title>Genome sequence of an obligate intracellular pathogen of humans: Chlamydia trachomatis.</title>
        <authorList>
            <person name="Stephens R.S."/>
            <person name="Kalman S."/>
            <person name="Lammel C.J."/>
            <person name="Fan J."/>
            <person name="Marathe R."/>
            <person name="Aravind L."/>
            <person name="Mitchell W.P."/>
            <person name="Olinger L."/>
            <person name="Tatusov R.L."/>
            <person name="Zhao Q."/>
            <person name="Koonin E.V."/>
            <person name="Davis R.W."/>
        </authorList>
    </citation>
    <scope>NUCLEOTIDE SEQUENCE [LARGE SCALE GENOMIC DNA]</scope>
    <source>
        <strain>ATCC VR-885 / DSM 19411 / UW-3/Cx</strain>
    </source>
</reference>
<protein>
    <recommendedName>
        <fullName>Probable outer membrane protein PmpD</fullName>
    </recommendedName>
    <alternativeName>
        <fullName>Polymorphic membrane protein D</fullName>
    </alternativeName>
</protein>
<keyword id="KW-0998">Cell outer membrane</keyword>
<keyword id="KW-0134">Cell wall</keyword>
<keyword id="KW-0472">Membrane</keyword>
<keyword id="KW-1185">Reference proteome</keyword>
<keyword id="KW-0964">Secreted</keyword>
<keyword id="KW-0732">Signal</keyword>
<keyword id="KW-0812">Transmembrane</keyword>
<keyword id="KW-1134">Transmembrane beta strand</keyword>